<keyword id="KW-0067">ATP-binding</keyword>
<keyword id="KW-0963">Cytoplasm</keyword>
<keyword id="KW-0227">DNA damage</keyword>
<keyword id="KW-0233">DNA recombination</keyword>
<keyword id="KW-0234">DNA repair</keyword>
<keyword id="KW-0238">DNA-binding</keyword>
<keyword id="KW-0378">Hydrolase</keyword>
<keyword id="KW-0547">Nucleotide-binding</keyword>
<evidence type="ECO:0000255" key="1">
    <source>
        <dbReference type="HAMAP-Rule" id="MF_00016"/>
    </source>
</evidence>
<protein>
    <recommendedName>
        <fullName evidence="1">Holliday junction branch migration complex subunit RuvB</fullName>
        <ecNumber evidence="1">3.6.4.-</ecNumber>
    </recommendedName>
</protein>
<name>RUVB_BACC7</name>
<reference key="1">
    <citation type="submission" date="2008-10" db="EMBL/GenBank/DDBJ databases">
        <title>Genome sequence of Bacillus cereus AH187.</title>
        <authorList>
            <person name="Dodson R.J."/>
            <person name="Durkin A.S."/>
            <person name="Rosovitz M.J."/>
            <person name="Rasko D.A."/>
            <person name="Kolsto A.B."/>
            <person name="Okstad O.A."/>
            <person name="Ravel J."/>
            <person name="Sutton G."/>
        </authorList>
    </citation>
    <scope>NUCLEOTIDE SEQUENCE [LARGE SCALE GENOMIC DNA]</scope>
    <source>
        <strain>AH187</strain>
    </source>
</reference>
<comment type="function">
    <text evidence="1">The RuvA-RuvB-RuvC complex processes Holliday junction (HJ) DNA during genetic recombination and DNA repair, while the RuvA-RuvB complex plays an important role in the rescue of blocked DNA replication forks via replication fork reversal (RFR). RuvA specifically binds to HJ cruciform DNA, conferring on it an open structure. The RuvB hexamer acts as an ATP-dependent pump, pulling dsDNA into and through the RuvAB complex. RuvB forms 2 homohexamers on either side of HJ DNA bound by 1 or 2 RuvA tetramers; 4 subunits per hexamer contact DNA at a time. Coordinated motions by a converter formed by DNA-disengaged RuvB subunits stimulates ATP hydrolysis and nucleotide exchange. Immobilization of the converter enables RuvB to convert the ATP-contained energy into a lever motion, pulling 2 nucleotides of DNA out of the RuvA tetramer per ATP hydrolyzed, thus driving DNA branch migration. The RuvB motors rotate together with the DNA substrate, which together with the progressing nucleotide cycle form the mechanistic basis for DNA recombination by continuous HJ branch migration. Branch migration allows RuvC to scan DNA until it finds its consensus sequence, where it cleaves and resolves cruciform DNA.</text>
</comment>
<comment type="catalytic activity">
    <reaction evidence="1">
        <text>ATP + H2O = ADP + phosphate + H(+)</text>
        <dbReference type="Rhea" id="RHEA:13065"/>
        <dbReference type="ChEBI" id="CHEBI:15377"/>
        <dbReference type="ChEBI" id="CHEBI:15378"/>
        <dbReference type="ChEBI" id="CHEBI:30616"/>
        <dbReference type="ChEBI" id="CHEBI:43474"/>
        <dbReference type="ChEBI" id="CHEBI:456216"/>
    </reaction>
</comment>
<comment type="subunit">
    <text evidence="1">Homohexamer. Forms an RuvA(8)-RuvB(12)-Holliday junction (HJ) complex. HJ DNA is sandwiched between 2 RuvA tetramers; dsDNA enters through RuvA and exits via RuvB. An RuvB hexamer assembles on each DNA strand where it exits the tetramer. Each RuvB hexamer is contacted by two RuvA subunits (via domain III) on 2 adjacent RuvB subunits; this complex drives branch migration. In the full resolvosome a probable DNA-RuvA(4)-RuvB(12)-RuvC(2) complex forms which resolves the HJ.</text>
</comment>
<comment type="subcellular location">
    <subcellularLocation>
        <location evidence="1">Cytoplasm</location>
    </subcellularLocation>
</comment>
<comment type="domain">
    <text evidence="1">Has 3 domains, the large (RuvB-L) and small ATPase (RuvB-S) domains and the C-terminal head (RuvB-H) domain. The head domain binds DNA, while the ATPase domains jointly bind ATP, ADP or are empty depending on the state of the subunit in the translocation cycle. During a single DNA translocation step the structure of each domain remains the same, but their relative positions change.</text>
</comment>
<comment type="similarity">
    <text evidence="1">Belongs to the RuvB family.</text>
</comment>
<accession>B7HQH9</accession>
<proteinExistence type="inferred from homology"/>
<feature type="chain" id="PRO_1000195199" description="Holliday junction branch migration complex subunit RuvB">
    <location>
        <begin position="1"/>
        <end position="333"/>
    </location>
</feature>
<feature type="region of interest" description="Large ATPase domain (RuvB-L)" evidence="1">
    <location>
        <begin position="1"/>
        <end position="182"/>
    </location>
</feature>
<feature type="region of interest" description="Small ATPAse domain (RuvB-S)" evidence="1">
    <location>
        <begin position="183"/>
        <end position="253"/>
    </location>
</feature>
<feature type="region of interest" description="Head domain (RuvB-H)" evidence="1">
    <location>
        <begin position="256"/>
        <end position="333"/>
    </location>
</feature>
<feature type="binding site" evidence="1">
    <location>
        <position position="21"/>
    </location>
    <ligand>
        <name>ATP</name>
        <dbReference type="ChEBI" id="CHEBI:30616"/>
    </ligand>
</feature>
<feature type="binding site" evidence="1">
    <location>
        <position position="22"/>
    </location>
    <ligand>
        <name>ATP</name>
        <dbReference type="ChEBI" id="CHEBI:30616"/>
    </ligand>
</feature>
<feature type="binding site" evidence="1">
    <location>
        <position position="63"/>
    </location>
    <ligand>
        <name>ATP</name>
        <dbReference type="ChEBI" id="CHEBI:30616"/>
    </ligand>
</feature>
<feature type="binding site" evidence="1">
    <location>
        <position position="66"/>
    </location>
    <ligand>
        <name>ATP</name>
        <dbReference type="ChEBI" id="CHEBI:30616"/>
    </ligand>
</feature>
<feature type="binding site" evidence="1">
    <location>
        <position position="67"/>
    </location>
    <ligand>
        <name>ATP</name>
        <dbReference type="ChEBI" id="CHEBI:30616"/>
    </ligand>
</feature>
<feature type="binding site" evidence="1">
    <location>
        <position position="67"/>
    </location>
    <ligand>
        <name>Mg(2+)</name>
        <dbReference type="ChEBI" id="CHEBI:18420"/>
    </ligand>
</feature>
<feature type="binding site" evidence="1">
    <location>
        <position position="68"/>
    </location>
    <ligand>
        <name>ATP</name>
        <dbReference type="ChEBI" id="CHEBI:30616"/>
    </ligand>
</feature>
<feature type="binding site" evidence="1">
    <location>
        <begin position="129"/>
        <end position="131"/>
    </location>
    <ligand>
        <name>ATP</name>
        <dbReference type="ChEBI" id="CHEBI:30616"/>
    </ligand>
</feature>
<feature type="binding site" evidence="1">
    <location>
        <position position="172"/>
    </location>
    <ligand>
        <name>ATP</name>
        <dbReference type="ChEBI" id="CHEBI:30616"/>
    </ligand>
</feature>
<feature type="binding site" evidence="1">
    <location>
        <position position="182"/>
    </location>
    <ligand>
        <name>ATP</name>
        <dbReference type="ChEBI" id="CHEBI:30616"/>
    </ligand>
</feature>
<feature type="binding site" evidence="1">
    <location>
        <position position="219"/>
    </location>
    <ligand>
        <name>ATP</name>
        <dbReference type="ChEBI" id="CHEBI:30616"/>
    </ligand>
</feature>
<feature type="binding site" evidence="1">
    <location>
        <position position="311"/>
    </location>
    <ligand>
        <name>DNA</name>
        <dbReference type="ChEBI" id="CHEBI:16991"/>
    </ligand>
</feature>
<feature type="binding site" evidence="1">
    <location>
        <position position="316"/>
    </location>
    <ligand>
        <name>DNA</name>
        <dbReference type="ChEBI" id="CHEBI:16991"/>
    </ligand>
</feature>
<dbReference type="EC" id="3.6.4.-" evidence="1"/>
<dbReference type="EMBL" id="CP001177">
    <property type="protein sequence ID" value="ACJ77698.1"/>
    <property type="molecule type" value="Genomic_DNA"/>
</dbReference>
<dbReference type="SMR" id="B7HQH9"/>
<dbReference type="KEGG" id="bcr:BCAH187_A4554"/>
<dbReference type="HOGENOM" id="CLU_055599_1_0_9"/>
<dbReference type="Proteomes" id="UP000002214">
    <property type="component" value="Chromosome"/>
</dbReference>
<dbReference type="GO" id="GO:0005737">
    <property type="term" value="C:cytoplasm"/>
    <property type="evidence" value="ECO:0007669"/>
    <property type="project" value="UniProtKB-SubCell"/>
</dbReference>
<dbReference type="GO" id="GO:0048476">
    <property type="term" value="C:Holliday junction resolvase complex"/>
    <property type="evidence" value="ECO:0007669"/>
    <property type="project" value="UniProtKB-UniRule"/>
</dbReference>
<dbReference type="GO" id="GO:0005524">
    <property type="term" value="F:ATP binding"/>
    <property type="evidence" value="ECO:0007669"/>
    <property type="project" value="UniProtKB-UniRule"/>
</dbReference>
<dbReference type="GO" id="GO:0016887">
    <property type="term" value="F:ATP hydrolysis activity"/>
    <property type="evidence" value="ECO:0007669"/>
    <property type="project" value="InterPro"/>
</dbReference>
<dbReference type="GO" id="GO:0000400">
    <property type="term" value="F:four-way junction DNA binding"/>
    <property type="evidence" value="ECO:0007669"/>
    <property type="project" value="UniProtKB-UniRule"/>
</dbReference>
<dbReference type="GO" id="GO:0009378">
    <property type="term" value="F:four-way junction helicase activity"/>
    <property type="evidence" value="ECO:0007669"/>
    <property type="project" value="InterPro"/>
</dbReference>
<dbReference type="GO" id="GO:0006310">
    <property type="term" value="P:DNA recombination"/>
    <property type="evidence" value="ECO:0007669"/>
    <property type="project" value="UniProtKB-UniRule"/>
</dbReference>
<dbReference type="GO" id="GO:0006281">
    <property type="term" value="P:DNA repair"/>
    <property type="evidence" value="ECO:0007669"/>
    <property type="project" value="UniProtKB-UniRule"/>
</dbReference>
<dbReference type="CDD" id="cd00009">
    <property type="entry name" value="AAA"/>
    <property type="match status" value="1"/>
</dbReference>
<dbReference type="Gene3D" id="1.10.8.60">
    <property type="match status" value="1"/>
</dbReference>
<dbReference type="Gene3D" id="3.40.50.300">
    <property type="entry name" value="P-loop containing nucleotide triphosphate hydrolases"/>
    <property type="match status" value="1"/>
</dbReference>
<dbReference type="Gene3D" id="1.10.10.10">
    <property type="entry name" value="Winged helix-like DNA-binding domain superfamily/Winged helix DNA-binding domain"/>
    <property type="match status" value="1"/>
</dbReference>
<dbReference type="HAMAP" id="MF_00016">
    <property type="entry name" value="DNA_HJ_migration_RuvB"/>
    <property type="match status" value="1"/>
</dbReference>
<dbReference type="InterPro" id="IPR003593">
    <property type="entry name" value="AAA+_ATPase"/>
</dbReference>
<dbReference type="InterPro" id="IPR041445">
    <property type="entry name" value="AAA_lid_4"/>
</dbReference>
<dbReference type="InterPro" id="IPR004605">
    <property type="entry name" value="DNA_helicase_Holl-junc_RuvB"/>
</dbReference>
<dbReference type="InterPro" id="IPR027417">
    <property type="entry name" value="P-loop_NTPase"/>
</dbReference>
<dbReference type="InterPro" id="IPR008824">
    <property type="entry name" value="RuvB-like_N"/>
</dbReference>
<dbReference type="InterPro" id="IPR008823">
    <property type="entry name" value="RuvB_C"/>
</dbReference>
<dbReference type="InterPro" id="IPR036388">
    <property type="entry name" value="WH-like_DNA-bd_sf"/>
</dbReference>
<dbReference type="InterPro" id="IPR036390">
    <property type="entry name" value="WH_DNA-bd_sf"/>
</dbReference>
<dbReference type="NCBIfam" id="NF000868">
    <property type="entry name" value="PRK00080.1"/>
    <property type="match status" value="1"/>
</dbReference>
<dbReference type="NCBIfam" id="TIGR00635">
    <property type="entry name" value="ruvB"/>
    <property type="match status" value="1"/>
</dbReference>
<dbReference type="PANTHER" id="PTHR42848">
    <property type="match status" value="1"/>
</dbReference>
<dbReference type="PANTHER" id="PTHR42848:SF1">
    <property type="entry name" value="HOLLIDAY JUNCTION BRANCH MIGRATION COMPLEX SUBUNIT RUVB"/>
    <property type="match status" value="1"/>
</dbReference>
<dbReference type="Pfam" id="PF17864">
    <property type="entry name" value="AAA_lid_4"/>
    <property type="match status" value="1"/>
</dbReference>
<dbReference type="Pfam" id="PF05491">
    <property type="entry name" value="RuvB_C"/>
    <property type="match status" value="1"/>
</dbReference>
<dbReference type="Pfam" id="PF05496">
    <property type="entry name" value="RuvB_N"/>
    <property type="match status" value="1"/>
</dbReference>
<dbReference type="SMART" id="SM00382">
    <property type="entry name" value="AAA"/>
    <property type="match status" value="1"/>
</dbReference>
<dbReference type="SUPFAM" id="SSF52540">
    <property type="entry name" value="P-loop containing nucleoside triphosphate hydrolases"/>
    <property type="match status" value="1"/>
</dbReference>
<dbReference type="SUPFAM" id="SSF46785">
    <property type="entry name" value="Winged helix' DNA-binding domain"/>
    <property type="match status" value="1"/>
</dbReference>
<gene>
    <name evidence="1" type="primary">ruvB</name>
    <name type="ordered locus">BCAH187_A4554</name>
</gene>
<sequence length="333" mass="37113">MDERLLSGESAYEDADLEYSLRPQTLRQYIGQDKAKHNLEVFIEAAKMREETLDHVLLYGPPGLGKTTLANIIANEMGVNVRTTSGPAIERPGDLAAVLTSLQPGDVLFIDEIHRLHRSIEEVLYPAMEDFCLDIVIGKGPSARSVRLDLPPFTLVGATTRAGALSAPLRDRFGVLSRLEYYTVDQLSEIVERTAEVFEVEIDSLAALEIARRARGTPRIANRLLRRVRDFAQVRGNGTVTMEITQMALELLQVDKLGLDHIDHKLLLGIIEKFRGGPVGLETVSATIGEESHTIEDVYEPYLLQIGFLQRTPRGRIVTPLAYEHFGMEMPKV</sequence>
<organism>
    <name type="scientific">Bacillus cereus (strain AH187)</name>
    <dbReference type="NCBI Taxonomy" id="405534"/>
    <lineage>
        <taxon>Bacteria</taxon>
        <taxon>Bacillati</taxon>
        <taxon>Bacillota</taxon>
        <taxon>Bacilli</taxon>
        <taxon>Bacillales</taxon>
        <taxon>Bacillaceae</taxon>
        <taxon>Bacillus</taxon>
        <taxon>Bacillus cereus group</taxon>
    </lineage>
</organism>